<organism>
    <name type="scientific">Nitrosococcus oceani (strain ATCC 19707 / BCRC 17464 / JCM 30415 / NCIMB 11848 / C-107)</name>
    <dbReference type="NCBI Taxonomy" id="323261"/>
    <lineage>
        <taxon>Bacteria</taxon>
        <taxon>Pseudomonadati</taxon>
        <taxon>Pseudomonadota</taxon>
        <taxon>Gammaproteobacteria</taxon>
        <taxon>Chromatiales</taxon>
        <taxon>Chromatiaceae</taxon>
        <taxon>Nitrosococcus</taxon>
    </lineage>
</organism>
<feature type="chain" id="PRO_0000241123" description="Glutamyl-tRNA(Gln) amidotransferase subunit A">
    <location>
        <begin position="1"/>
        <end position="483"/>
    </location>
</feature>
<feature type="active site" description="Charge relay system" evidence="1">
    <location>
        <position position="76"/>
    </location>
</feature>
<feature type="active site" description="Charge relay system" evidence="1">
    <location>
        <position position="151"/>
    </location>
</feature>
<feature type="active site" description="Acyl-ester intermediate" evidence="1">
    <location>
        <position position="175"/>
    </location>
</feature>
<name>GATA_NITOC</name>
<keyword id="KW-0067">ATP-binding</keyword>
<keyword id="KW-0436">Ligase</keyword>
<keyword id="KW-0547">Nucleotide-binding</keyword>
<keyword id="KW-0648">Protein biosynthesis</keyword>
<keyword id="KW-1185">Reference proteome</keyword>
<proteinExistence type="inferred from homology"/>
<reference key="1">
    <citation type="journal article" date="2006" name="Appl. Environ. Microbiol.">
        <title>Complete genome sequence of the marine, chemolithoautotrophic, ammonia-oxidizing bacterium Nitrosococcus oceani ATCC 19707.</title>
        <authorList>
            <person name="Klotz M.G."/>
            <person name="Arp D.J."/>
            <person name="Chain P.S.G."/>
            <person name="El-Sheikh A.F."/>
            <person name="Hauser L.J."/>
            <person name="Hommes N.G."/>
            <person name="Larimer F.W."/>
            <person name="Malfatti S.A."/>
            <person name="Norton J.M."/>
            <person name="Poret-Peterson A.T."/>
            <person name="Vergez L.M."/>
            <person name="Ward B.B."/>
        </authorList>
    </citation>
    <scope>NUCLEOTIDE SEQUENCE [LARGE SCALE GENOMIC DNA]</scope>
    <source>
        <strain>ATCC 19707 / BCRC 17464 / JCM 30415 / NCIMB 11848 / C-107</strain>
    </source>
</reference>
<gene>
    <name evidence="1" type="primary">gatA</name>
    <name type="ordered locus">Noc_2636</name>
</gene>
<sequence>MHHKSLAELASALKAREFSSEELTQHYLKRIERLNEDLNSFITVSTEEALKQAKAADAILQSGEGSSITGIPLAHKDIFCTTGVKTSCGSKMLDNFTAPYNATVVSRLKTAGAVMLGKTNMDEFAMGSSNETSFYGSVKNPWAHDRVPGGSSGGSAAAVAARLTPAATGTDTGGSIRQPAALCGITGLKPTYGRVSRYGMIAFASSLDQGGPMARTAQDAALLLNVMAGFDERDSTSVAQDVPDYTLSLEESIKGIKIGLPTEYFDENLNPGIAIPIEAAIKEFERLGAQIREISLPNTKLAVPTYYVVAPAECSSNLSRYDGTRFGYRCDNPKDLLELYCRSRGEGFGPEVKRRILIGTYVLSAGYYDAYYLKAQKLRRLISDDFKQALTEVDVIMGPTSPTPAFRLGEKSDDPVAMYLADIYTINVNLAGLPALSIPAGFAQGLPVGLQIIGNYFSESRLLNLAHRYQQVTDWHDRIPAGY</sequence>
<dbReference type="EC" id="6.3.5.7" evidence="1"/>
<dbReference type="EMBL" id="CP000127">
    <property type="protein sequence ID" value="ABA59089.1"/>
    <property type="molecule type" value="Genomic_DNA"/>
</dbReference>
<dbReference type="RefSeq" id="WP_002812989.1">
    <property type="nucleotide sequence ID" value="NC_007484.1"/>
</dbReference>
<dbReference type="SMR" id="Q3J7V7"/>
<dbReference type="STRING" id="323261.Noc_2636"/>
<dbReference type="KEGG" id="noc:Noc_2636"/>
<dbReference type="eggNOG" id="COG0154">
    <property type="taxonomic scope" value="Bacteria"/>
</dbReference>
<dbReference type="HOGENOM" id="CLU_009600_0_3_6"/>
<dbReference type="InParanoid" id="Q3J7V7"/>
<dbReference type="Proteomes" id="UP000006838">
    <property type="component" value="Chromosome"/>
</dbReference>
<dbReference type="GO" id="GO:0030956">
    <property type="term" value="C:glutamyl-tRNA(Gln) amidotransferase complex"/>
    <property type="evidence" value="ECO:0007669"/>
    <property type="project" value="InterPro"/>
</dbReference>
<dbReference type="GO" id="GO:0005524">
    <property type="term" value="F:ATP binding"/>
    <property type="evidence" value="ECO:0007669"/>
    <property type="project" value="UniProtKB-KW"/>
</dbReference>
<dbReference type="GO" id="GO:0050567">
    <property type="term" value="F:glutaminyl-tRNA synthase (glutamine-hydrolyzing) activity"/>
    <property type="evidence" value="ECO:0007669"/>
    <property type="project" value="UniProtKB-UniRule"/>
</dbReference>
<dbReference type="GO" id="GO:0006412">
    <property type="term" value="P:translation"/>
    <property type="evidence" value="ECO:0007669"/>
    <property type="project" value="UniProtKB-UniRule"/>
</dbReference>
<dbReference type="Gene3D" id="3.90.1300.10">
    <property type="entry name" value="Amidase signature (AS) domain"/>
    <property type="match status" value="1"/>
</dbReference>
<dbReference type="HAMAP" id="MF_00120">
    <property type="entry name" value="GatA"/>
    <property type="match status" value="1"/>
</dbReference>
<dbReference type="InterPro" id="IPR000120">
    <property type="entry name" value="Amidase"/>
</dbReference>
<dbReference type="InterPro" id="IPR020556">
    <property type="entry name" value="Amidase_CS"/>
</dbReference>
<dbReference type="InterPro" id="IPR023631">
    <property type="entry name" value="Amidase_dom"/>
</dbReference>
<dbReference type="InterPro" id="IPR036928">
    <property type="entry name" value="AS_sf"/>
</dbReference>
<dbReference type="InterPro" id="IPR004412">
    <property type="entry name" value="GatA"/>
</dbReference>
<dbReference type="NCBIfam" id="TIGR00132">
    <property type="entry name" value="gatA"/>
    <property type="match status" value="1"/>
</dbReference>
<dbReference type="PANTHER" id="PTHR11895:SF151">
    <property type="entry name" value="GLUTAMYL-TRNA(GLN) AMIDOTRANSFERASE SUBUNIT A"/>
    <property type="match status" value="1"/>
</dbReference>
<dbReference type="PANTHER" id="PTHR11895">
    <property type="entry name" value="TRANSAMIDASE"/>
    <property type="match status" value="1"/>
</dbReference>
<dbReference type="Pfam" id="PF01425">
    <property type="entry name" value="Amidase"/>
    <property type="match status" value="1"/>
</dbReference>
<dbReference type="SUPFAM" id="SSF75304">
    <property type="entry name" value="Amidase signature (AS) enzymes"/>
    <property type="match status" value="1"/>
</dbReference>
<dbReference type="PROSITE" id="PS00571">
    <property type="entry name" value="AMIDASES"/>
    <property type="match status" value="1"/>
</dbReference>
<accession>Q3J7V7</accession>
<protein>
    <recommendedName>
        <fullName evidence="1">Glutamyl-tRNA(Gln) amidotransferase subunit A</fullName>
        <shortName evidence="1">Glu-ADT subunit A</shortName>
        <ecNumber evidence="1">6.3.5.7</ecNumber>
    </recommendedName>
</protein>
<evidence type="ECO:0000255" key="1">
    <source>
        <dbReference type="HAMAP-Rule" id="MF_00120"/>
    </source>
</evidence>
<comment type="function">
    <text evidence="1">Allows the formation of correctly charged Gln-tRNA(Gln) through the transamidation of misacylated Glu-tRNA(Gln) in organisms which lack glutaminyl-tRNA synthetase. The reaction takes place in the presence of glutamine and ATP through an activated gamma-phospho-Glu-tRNA(Gln).</text>
</comment>
<comment type="catalytic activity">
    <reaction evidence="1">
        <text>L-glutamyl-tRNA(Gln) + L-glutamine + ATP + H2O = L-glutaminyl-tRNA(Gln) + L-glutamate + ADP + phosphate + H(+)</text>
        <dbReference type="Rhea" id="RHEA:17521"/>
        <dbReference type="Rhea" id="RHEA-COMP:9681"/>
        <dbReference type="Rhea" id="RHEA-COMP:9684"/>
        <dbReference type="ChEBI" id="CHEBI:15377"/>
        <dbReference type="ChEBI" id="CHEBI:15378"/>
        <dbReference type="ChEBI" id="CHEBI:29985"/>
        <dbReference type="ChEBI" id="CHEBI:30616"/>
        <dbReference type="ChEBI" id="CHEBI:43474"/>
        <dbReference type="ChEBI" id="CHEBI:58359"/>
        <dbReference type="ChEBI" id="CHEBI:78520"/>
        <dbReference type="ChEBI" id="CHEBI:78521"/>
        <dbReference type="ChEBI" id="CHEBI:456216"/>
        <dbReference type="EC" id="6.3.5.7"/>
    </reaction>
</comment>
<comment type="subunit">
    <text evidence="1">Heterotrimer of A, B and C subunits.</text>
</comment>
<comment type="similarity">
    <text evidence="1">Belongs to the amidase family. GatA subfamily.</text>
</comment>